<feature type="chain" id="PRO_0000126855" description="Phenylalanine--tRNA ligase beta subunit">
    <location>
        <begin position="1"/>
        <end position="804"/>
    </location>
</feature>
<feature type="domain" description="tRNA-binding" evidence="1">
    <location>
        <begin position="38"/>
        <end position="148"/>
    </location>
</feature>
<feature type="domain" description="B5" evidence="1">
    <location>
        <begin position="401"/>
        <end position="476"/>
    </location>
</feature>
<feature type="domain" description="FDX-ACB" evidence="1">
    <location>
        <begin position="710"/>
        <end position="803"/>
    </location>
</feature>
<feature type="binding site" evidence="1">
    <location>
        <position position="454"/>
    </location>
    <ligand>
        <name>Mg(2+)</name>
        <dbReference type="ChEBI" id="CHEBI:18420"/>
        <note>shared with alpha subunit</note>
    </ligand>
</feature>
<feature type="binding site" evidence="1">
    <location>
        <position position="460"/>
    </location>
    <ligand>
        <name>Mg(2+)</name>
        <dbReference type="ChEBI" id="CHEBI:18420"/>
        <note>shared with alpha subunit</note>
    </ligand>
</feature>
<feature type="binding site" evidence="1">
    <location>
        <position position="463"/>
    </location>
    <ligand>
        <name>Mg(2+)</name>
        <dbReference type="ChEBI" id="CHEBI:18420"/>
        <note>shared with alpha subunit</note>
    </ligand>
</feature>
<feature type="binding site" evidence="1">
    <location>
        <position position="464"/>
    </location>
    <ligand>
        <name>Mg(2+)</name>
        <dbReference type="ChEBI" id="CHEBI:18420"/>
        <note>shared with alpha subunit</note>
    </ligand>
</feature>
<reference key="1">
    <citation type="journal article" date="2002" name="Proc. Natl. Acad. Sci. U.S.A.">
        <title>The Brucella suis genome reveals fundamental similarities between animal and plant pathogens and symbionts.</title>
        <authorList>
            <person name="Paulsen I.T."/>
            <person name="Seshadri R."/>
            <person name="Nelson K.E."/>
            <person name="Eisen J.A."/>
            <person name="Heidelberg J.F."/>
            <person name="Read T.D."/>
            <person name="Dodson R.J."/>
            <person name="Umayam L.A."/>
            <person name="Brinkac L.M."/>
            <person name="Beanan M.J."/>
            <person name="Daugherty S.C."/>
            <person name="DeBoy R.T."/>
            <person name="Durkin A.S."/>
            <person name="Kolonay J.F."/>
            <person name="Madupu R."/>
            <person name="Nelson W.C."/>
            <person name="Ayodeji B."/>
            <person name="Kraul M."/>
            <person name="Shetty J."/>
            <person name="Malek J.A."/>
            <person name="Van Aken S.E."/>
            <person name="Riedmuller S."/>
            <person name="Tettelin H."/>
            <person name="Gill S.R."/>
            <person name="White O."/>
            <person name="Salzberg S.L."/>
            <person name="Hoover D.L."/>
            <person name="Lindler L.E."/>
            <person name="Halling S.M."/>
            <person name="Boyle S.M."/>
            <person name="Fraser C.M."/>
        </authorList>
    </citation>
    <scope>NUCLEOTIDE SEQUENCE [LARGE SCALE GENOMIC DNA]</scope>
    <source>
        <strain>1330</strain>
    </source>
</reference>
<reference key="2">
    <citation type="journal article" date="2011" name="J. Bacteriol.">
        <title>Revised genome sequence of Brucella suis 1330.</title>
        <authorList>
            <person name="Tae H."/>
            <person name="Shallom S."/>
            <person name="Settlage R."/>
            <person name="Preston D."/>
            <person name="Adams L.G."/>
            <person name="Garner H.R."/>
        </authorList>
    </citation>
    <scope>NUCLEOTIDE SEQUENCE [LARGE SCALE GENOMIC DNA]</scope>
    <source>
        <strain>1330</strain>
    </source>
</reference>
<keyword id="KW-0030">Aminoacyl-tRNA synthetase</keyword>
<keyword id="KW-0067">ATP-binding</keyword>
<keyword id="KW-0963">Cytoplasm</keyword>
<keyword id="KW-0436">Ligase</keyword>
<keyword id="KW-0460">Magnesium</keyword>
<keyword id="KW-0479">Metal-binding</keyword>
<keyword id="KW-0547">Nucleotide-binding</keyword>
<keyword id="KW-0648">Protein biosynthesis</keyword>
<keyword id="KW-0694">RNA-binding</keyword>
<keyword id="KW-0820">tRNA-binding</keyword>
<sequence length="804" mass="85849">MKFTLSWLKDHLETDATLDEIVEKLTDIGLEVESVDDRAAFRAFTIARVLTATRHPDADKLQVLSVDTGDGKPVQVVCGAPNARAGLVGVLGRPGDYVPGLDVTLSVGKIRGVESFGMMCSERELELSDEHNGIIDLAENAPVGTSFAAYMGLDDPIIEIGLTPNRADCTGIRGIARDLAAAGLGTLKNTLPDAVKGEGETPVKVILDQDAGNPFCTGFALRMVKGVKNGPSPKWMQQRLKAIGLRPINALVDITNYVTFDQGRPLHVFDAAKVKGNLTVRTARDGETILALDQREYKLNAGMYVIADENGPESIAGIMGGEHSGCDENTVDVLIESALWDPRMIARTGRELGIVTDARYRFERGVDPEMMVPGAEIATKLVLELCGGQPTVLDVVGYKPHTARVIDFPVTEVKRLTGLDVSYEDAFDILKRLGFGVEGDGKTIRATVPSWRGDVEGKADLVEEVMRIHGINRIDPQPLPSHGAVNGRILTTLQIRTRHARRMLASRGMMEAVTYSFISEAQAKAFGGGKPELKLANPIAADMSDMRPSLLPGLLAAAQRNADRGFGDIALFEVSGIYEGDTPDKQRRVAGGVRRGTAKVEGAGRFWAGNAAPVGVFDAKADALAALEAAGAPVDRIQIEAGGPEWLHPGRSGTLKLGPKVVLGTFGEFHPDTLEALDVSGALCGFEVYLDAIPEPKAKSARTKPALSLSLFQSLKRDYAFVVDAAVEAGNVVKAVSSADKKLIVGVQVFDIFTGASLGEGKKSIAVEVLLQPQDRTLTDEDLEALSKQIVASVAKQTGGVLRG</sequence>
<proteinExistence type="inferred from homology"/>
<organism>
    <name type="scientific">Brucella suis biovar 1 (strain 1330)</name>
    <dbReference type="NCBI Taxonomy" id="204722"/>
    <lineage>
        <taxon>Bacteria</taxon>
        <taxon>Pseudomonadati</taxon>
        <taxon>Pseudomonadota</taxon>
        <taxon>Alphaproteobacteria</taxon>
        <taxon>Hyphomicrobiales</taxon>
        <taxon>Brucellaceae</taxon>
        <taxon>Brucella/Ochrobactrum group</taxon>
        <taxon>Brucella</taxon>
    </lineage>
</organism>
<dbReference type="EC" id="6.1.1.20" evidence="1"/>
<dbReference type="EMBL" id="AE014291">
    <property type="protein sequence ID" value="AAN31013.1"/>
    <property type="molecule type" value="Genomic_DNA"/>
</dbReference>
<dbReference type="EMBL" id="CP002997">
    <property type="protein sequence ID" value="AEM19430.1"/>
    <property type="molecule type" value="Genomic_DNA"/>
</dbReference>
<dbReference type="RefSeq" id="WP_004689338.1">
    <property type="nucleotide sequence ID" value="NZ_KN046804.1"/>
</dbReference>
<dbReference type="SMR" id="Q8FXX4"/>
<dbReference type="GeneID" id="55591689"/>
<dbReference type="KEGG" id="bms:BR2123"/>
<dbReference type="KEGG" id="bsi:BS1330_I2117"/>
<dbReference type="PATRIC" id="fig|204722.22.peg.1893"/>
<dbReference type="HOGENOM" id="CLU_016891_0_0_5"/>
<dbReference type="PhylomeDB" id="Q8FXX4"/>
<dbReference type="Proteomes" id="UP000007104">
    <property type="component" value="Chromosome I"/>
</dbReference>
<dbReference type="GO" id="GO:0009328">
    <property type="term" value="C:phenylalanine-tRNA ligase complex"/>
    <property type="evidence" value="ECO:0007669"/>
    <property type="project" value="TreeGrafter"/>
</dbReference>
<dbReference type="GO" id="GO:0005524">
    <property type="term" value="F:ATP binding"/>
    <property type="evidence" value="ECO:0007669"/>
    <property type="project" value="UniProtKB-UniRule"/>
</dbReference>
<dbReference type="GO" id="GO:0000287">
    <property type="term" value="F:magnesium ion binding"/>
    <property type="evidence" value="ECO:0007669"/>
    <property type="project" value="UniProtKB-UniRule"/>
</dbReference>
<dbReference type="GO" id="GO:0004826">
    <property type="term" value="F:phenylalanine-tRNA ligase activity"/>
    <property type="evidence" value="ECO:0007669"/>
    <property type="project" value="UniProtKB-UniRule"/>
</dbReference>
<dbReference type="GO" id="GO:0000049">
    <property type="term" value="F:tRNA binding"/>
    <property type="evidence" value="ECO:0007669"/>
    <property type="project" value="UniProtKB-KW"/>
</dbReference>
<dbReference type="GO" id="GO:0006432">
    <property type="term" value="P:phenylalanyl-tRNA aminoacylation"/>
    <property type="evidence" value="ECO:0007669"/>
    <property type="project" value="UniProtKB-UniRule"/>
</dbReference>
<dbReference type="CDD" id="cd00769">
    <property type="entry name" value="PheRS_beta_core"/>
    <property type="match status" value="1"/>
</dbReference>
<dbReference type="CDD" id="cd02796">
    <property type="entry name" value="tRNA_bind_bactPheRS"/>
    <property type="match status" value="1"/>
</dbReference>
<dbReference type="FunFam" id="2.40.50.140:FF:000045">
    <property type="entry name" value="Phenylalanine--tRNA ligase beta subunit"/>
    <property type="match status" value="1"/>
</dbReference>
<dbReference type="FunFam" id="3.30.70.380:FF:000001">
    <property type="entry name" value="Phenylalanine--tRNA ligase beta subunit"/>
    <property type="match status" value="1"/>
</dbReference>
<dbReference type="Gene3D" id="3.30.56.10">
    <property type="match status" value="2"/>
</dbReference>
<dbReference type="Gene3D" id="3.30.930.10">
    <property type="entry name" value="Bira Bifunctional Protein, Domain 2"/>
    <property type="match status" value="1"/>
</dbReference>
<dbReference type="Gene3D" id="3.30.70.380">
    <property type="entry name" value="Ferrodoxin-fold anticodon-binding domain"/>
    <property type="match status" value="1"/>
</dbReference>
<dbReference type="Gene3D" id="2.40.50.140">
    <property type="entry name" value="Nucleic acid-binding proteins"/>
    <property type="match status" value="1"/>
</dbReference>
<dbReference type="Gene3D" id="3.50.40.10">
    <property type="entry name" value="Phenylalanyl-trna Synthetase, Chain B, domain 3"/>
    <property type="match status" value="1"/>
</dbReference>
<dbReference type="HAMAP" id="MF_00283">
    <property type="entry name" value="Phe_tRNA_synth_beta1"/>
    <property type="match status" value="1"/>
</dbReference>
<dbReference type="InterPro" id="IPR045864">
    <property type="entry name" value="aa-tRNA-synth_II/BPL/LPL"/>
</dbReference>
<dbReference type="InterPro" id="IPR005146">
    <property type="entry name" value="B3/B4_tRNA-bd"/>
</dbReference>
<dbReference type="InterPro" id="IPR009061">
    <property type="entry name" value="DNA-bd_dom_put_sf"/>
</dbReference>
<dbReference type="InterPro" id="IPR005121">
    <property type="entry name" value="Fdx_antiC-bd"/>
</dbReference>
<dbReference type="InterPro" id="IPR036690">
    <property type="entry name" value="Fdx_antiC-bd_sf"/>
</dbReference>
<dbReference type="InterPro" id="IPR012340">
    <property type="entry name" value="NA-bd_OB-fold"/>
</dbReference>
<dbReference type="InterPro" id="IPR045060">
    <property type="entry name" value="Phe-tRNA-ligase_IIc_bsu"/>
</dbReference>
<dbReference type="InterPro" id="IPR004532">
    <property type="entry name" value="Phe-tRNA-ligase_IIc_bsu_bact"/>
</dbReference>
<dbReference type="InterPro" id="IPR020825">
    <property type="entry name" value="Phe-tRNA_synthase-like_B3/B4"/>
</dbReference>
<dbReference type="InterPro" id="IPR041616">
    <property type="entry name" value="PheRS_beta_core"/>
</dbReference>
<dbReference type="InterPro" id="IPR002547">
    <property type="entry name" value="tRNA-bd_dom"/>
</dbReference>
<dbReference type="InterPro" id="IPR033714">
    <property type="entry name" value="tRNA_bind_bactPheRS"/>
</dbReference>
<dbReference type="InterPro" id="IPR005147">
    <property type="entry name" value="tRNA_synthase_B5-dom"/>
</dbReference>
<dbReference type="NCBIfam" id="TIGR00472">
    <property type="entry name" value="pheT_bact"/>
    <property type="match status" value="1"/>
</dbReference>
<dbReference type="NCBIfam" id="NF045760">
    <property type="entry name" value="YtpR"/>
    <property type="match status" value="1"/>
</dbReference>
<dbReference type="PANTHER" id="PTHR10947:SF0">
    <property type="entry name" value="PHENYLALANINE--TRNA LIGASE BETA SUBUNIT"/>
    <property type="match status" value="1"/>
</dbReference>
<dbReference type="PANTHER" id="PTHR10947">
    <property type="entry name" value="PHENYLALANYL-TRNA SYNTHETASE BETA CHAIN AND LEUCINE-RICH REPEAT-CONTAINING PROTEIN 47"/>
    <property type="match status" value="1"/>
</dbReference>
<dbReference type="Pfam" id="PF03483">
    <property type="entry name" value="B3_4"/>
    <property type="match status" value="1"/>
</dbReference>
<dbReference type="Pfam" id="PF03484">
    <property type="entry name" value="B5"/>
    <property type="match status" value="1"/>
</dbReference>
<dbReference type="Pfam" id="PF03147">
    <property type="entry name" value="FDX-ACB"/>
    <property type="match status" value="1"/>
</dbReference>
<dbReference type="Pfam" id="PF01588">
    <property type="entry name" value="tRNA_bind"/>
    <property type="match status" value="1"/>
</dbReference>
<dbReference type="Pfam" id="PF17759">
    <property type="entry name" value="tRNA_synthFbeta"/>
    <property type="match status" value="1"/>
</dbReference>
<dbReference type="SMART" id="SM00873">
    <property type="entry name" value="B3_4"/>
    <property type="match status" value="1"/>
</dbReference>
<dbReference type="SMART" id="SM00874">
    <property type="entry name" value="B5"/>
    <property type="match status" value="1"/>
</dbReference>
<dbReference type="SMART" id="SM00896">
    <property type="entry name" value="FDX-ACB"/>
    <property type="match status" value="1"/>
</dbReference>
<dbReference type="SUPFAM" id="SSF54991">
    <property type="entry name" value="Anticodon-binding domain of PheRS"/>
    <property type="match status" value="1"/>
</dbReference>
<dbReference type="SUPFAM" id="SSF55681">
    <property type="entry name" value="Class II aaRS and biotin synthetases"/>
    <property type="match status" value="1"/>
</dbReference>
<dbReference type="SUPFAM" id="SSF50249">
    <property type="entry name" value="Nucleic acid-binding proteins"/>
    <property type="match status" value="1"/>
</dbReference>
<dbReference type="SUPFAM" id="SSF56037">
    <property type="entry name" value="PheT/TilS domain"/>
    <property type="match status" value="1"/>
</dbReference>
<dbReference type="SUPFAM" id="SSF46955">
    <property type="entry name" value="Putative DNA-binding domain"/>
    <property type="match status" value="1"/>
</dbReference>
<dbReference type="PROSITE" id="PS51483">
    <property type="entry name" value="B5"/>
    <property type="match status" value="1"/>
</dbReference>
<dbReference type="PROSITE" id="PS51447">
    <property type="entry name" value="FDX_ACB"/>
    <property type="match status" value="1"/>
</dbReference>
<dbReference type="PROSITE" id="PS50886">
    <property type="entry name" value="TRBD"/>
    <property type="match status" value="1"/>
</dbReference>
<gene>
    <name evidence="1" type="primary">pheT</name>
    <name type="ordered locus">BR2123</name>
    <name type="ordered locus">BS1330_I2117</name>
</gene>
<comment type="catalytic activity">
    <reaction evidence="1">
        <text>tRNA(Phe) + L-phenylalanine + ATP = L-phenylalanyl-tRNA(Phe) + AMP + diphosphate + H(+)</text>
        <dbReference type="Rhea" id="RHEA:19413"/>
        <dbReference type="Rhea" id="RHEA-COMP:9668"/>
        <dbReference type="Rhea" id="RHEA-COMP:9699"/>
        <dbReference type="ChEBI" id="CHEBI:15378"/>
        <dbReference type="ChEBI" id="CHEBI:30616"/>
        <dbReference type="ChEBI" id="CHEBI:33019"/>
        <dbReference type="ChEBI" id="CHEBI:58095"/>
        <dbReference type="ChEBI" id="CHEBI:78442"/>
        <dbReference type="ChEBI" id="CHEBI:78531"/>
        <dbReference type="ChEBI" id="CHEBI:456215"/>
        <dbReference type="EC" id="6.1.1.20"/>
    </reaction>
</comment>
<comment type="cofactor">
    <cofactor evidence="1">
        <name>Mg(2+)</name>
        <dbReference type="ChEBI" id="CHEBI:18420"/>
    </cofactor>
    <text evidence="1">Binds 2 magnesium ions per tetramer.</text>
</comment>
<comment type="subunit">
    <text evidence="1">Tetramer of two alpha and two beta subunits.</text>
</comment>
<comment type="subcellular location">
    <subcellularLocation>
        <location evidence="1">Cytoplasm</location>
    </subcellularLocation>
</comment>
<comment type="similarity">
    <text evidence="1">Belongs to the phenylalanyl-tRNA synthetase beta subunit family. Type 1 subfamily.</text>
</comment>
<protein>
    <recommendedName>
        <fullName evidence="1">Phenylalanine--tRNA ligase beta subunit</fullName>
        <ecNumber evidence="1">6.1.1.20</ecNumber>
    </recommendedName>
    <alternativeName>
        <fullName evidence="1">Phenylalanyl-tRNA synthetase beta subunit</fullName>
        <shortName evidence="1">PheRS</shortName>
    </alternativeName>
</protein>
<evidence type="ECO:0000255" key="1">
    <source>
        <dbReference type="HAMAP-Rule" id="MF_00283"/>
    </source>
</evidence>
<name>SYFB_BRUSU</name>
<accession>Q8FXX4</accession>
<accession>G0K971</accession>